<proteinExistence type="evidence at protein level"/>
<keyword id="KW-0179">Complement alternate pathway</keyword>
<keyword id="KW-0180">Complement pathway</keyword>
<keyword id="KW-0204">Cytolysis</keyword>
<keyword id="KW-0903">Direct protein sequencing</keyword>
<keyword id="KW-1015">Disulfide bond</keyword>
<keyword id="KW-0245">EGF-like domain</keyword>
<keyword id="KW-0325">Glycoprotein</keyword>
<keyword id="KW-0391">Immunity</keyword>
<keyword id="KW-0399">Innate immunity</keyword>
<keyword id="KW-0472">Membrane</keyword>
<keyword id="KW-0473">Membrane attack complex</keyword>
<keyword id="KW-1185">Reference proteome</keyword>
<keyword id="KW-0964">Secreted</keyword>
<keyword id="KW-0732">Signal</keyword>
<keyword id="KW-1052">Target cell membrane</keyword>
<keyword id="KW-1053">Target membrane</keyword>
<keyword id="KW-0812">Transmembrane</keyword>
<keyword id="KW-1134">Transmembrane beta strand</keyword>
<dbReference type="EMBL" id="U20055">
    <property type="protein sequence ID" value="AAC48459.1"/>
    <property type="molecule type" value="mRNA"/>
</dbReference>
<dbReference type="RefSeq" id="NP_001075815.1">
    <property type="nucleotide sequence ID" value="NM_001082346.1"/>
</dbReference>
<dbReference type="SMR" id="P48747"/>
<dbReference type="CORUM" id="P48747"/>
<dbReference type="FunCoup" id="P48747">
    <property type="interactions" value="48"/>
</dbReference>
<dbReference type="STRING" id="9986.ENSOCUP00000010939"/>
<dbReference type="GlyCosmos" id="P48747">
    <property type="glycosylation" value="3 sites, No reported glycans"/>
</dbReference>
<dbReference type="PaxDb" id="9986-ENSOCUP00000010939"/>
<dbReference type="GeneID" id="100009197"/>
<dbReference type="KEGG" id="ocu:100009197"/>
<dbReference type="CTD" id="735"/>
<dbReference type="eggNOG" id="ENOG502QWHM">
    <property type="taxonomic scope" value="Eukaryota"/>
</dbReference>
<dbReference type="InParanoid" id="P48747"/>
<dbReference type="OrthoDB" id="10037824at2759"/>
<dbReference type="Proteomes" id="UP000001811">
    <property type="component" value="Unplaced"/>
</dbReference>
<dbReference type="GO" id="GO:0005615">
    <property type="term" value="C:extracellular space"/>
    <property type="evidence" value="ECO:0000250"/>
    <property type="project" value="UniProtKB"/>
</dbReference>
<dbReference type="GO" id="GO:0005579">
    <property type="term" value="C:membrane attack complex"/>
    <property type="evidence" value="ECO:0000250"/>
    <property type="project" value="UniProtKB"/>
</dbReference>
<dbReference type="GO" id="GO:0044218">
    <property type="term" value="C:other organism cell membrane"/>
    <property type="evidence" value="ECO:0007669"/>
    <property type="project" value="UniProtKB-KW"/>
</dbReference>
<dbReference type="GO" id="GO:0005886">
    <property type="term" value="C:plasma membrane"/>
    <property type="evidence" value="ECO:0000250"/>
    <property type="project" value="UniProtKB"/>
</dbReference>
<dbReference type="GO" id="GO:0001906">
    <property type="term" value="P:cell killing"/>
    <property type="evidence" value="ECO:0000250"/>
    <property type="project" value="UniProtKB"/>
</dbReference>
<dbReference type="GO" id="GO:0006957">
    <property type="term" value="P:complement activation, alternative pathway"/>
    <property type="evidence" value="ECO:0007669"/>
    <property type="project" value="UniProtKB-KW"/>
</dbReference>
<dbReference type="GO" id="GO:0006958">
    <property type="term" value="P:complement activation, classical pathway"/>
    <property type="evidence" value="ECO:0007669"/>
    <property type="project" value="UniProtKB-KW"/>
</dbReference>
<dbReference type="GO" id="GO:0031640">
    <property type="term" value="P:killing of cells of another organism"/>
    <property type="evidence" value="ECO:0007669"/>
    <property type="project" value="UniProtKB-KW"/>
</dbReference>
<dbReference type="GO" id="GO:0051260">
    <property type="term" value="P:protein homooligomerization"/>
    <property type="evidence" value="ECO:0000250"/>
    <property type="project" value="UniProtKB"/>
</dbReference>
<dbReference type="CDD" id="cd00112">
    <property type="entry name" value="LDLa"/>
    <property type="match status" value="1"/>
</dbReference>
<dbReference type="FunFam" id="2.10.25.10:FF:000766">
    <property type="entry name" value="Complement component C9"/>
    <property type="match status" value="1"/>
</dbReference>
<dbReference type="FunFam" id="2.20.100.10:FF:000089">
    <property type="entry name" value="Complement component C9"/>
    <property type="match status" value="1"/>
</dbReference>
<dbReference type="FunFam" id="4.10.400.10:FF:000065">
    <property type="entry name" value="Transmembrane protease serine 7"/>
    <property type="match status" value="1"/>
</dbReference>
<dbReference type="Gene3D" id="2.10.25.10">
    <property type="entry name" value="Laminin"/>
    <property type="match status" value="1"/>
</dbReference>
<dbReference type="Gene3D" id="4.10.400.10">
    <property type="entry name" value="Low-density Lipoprotein Receptor"/>
    <property type="match status" value="1"/>
</dbReference>
<dbReference type="Gene3D" id="2.20.100.10">
    <property type="entry name" value="Thrombospondin type-1 (TSP1) repeat"/>
    <property type="match status" value="1"/>
</dbReference>
<dbReference type="InterPro" id="IPR000742">
    <property type="entry name" value="EGF-like_dom"/>
</dbReference>
<dbReference type="InterPro" id="IPR036055">
    <property type="entry name" value="LDL_receptor-like_sf"/>
</dbReference>
<dbReference type="InterPro" id="IPR023415">
    <property type="entry name" value="LDLR_class-A_CS"/>
</dbReference>
<dbReference type="InterPro" id="IPR002172">
    <property type="entry name" value="LDrepeatLR_classA_rpt"/>
</dbReference>
<dbReference type="InterPro" id="IPR001862">
    <property type="entry name" value="MAC_perforin"/>
</dbReference>
<dbReference type="InterPro" id="IPR020864">
    <property type="entry name" value="MACPF"/>
</dbReference>
<dbReference type="InterPro" id="IPR020863">
    <property type="entry name" value="MACPF_CS"/>
</dbReference>
<dbReference type="InterPro" id="IPR000884">
    <property type="entry name" value="TSP1_rpt"/>
</dbReference>
<dbReference type="InterPro" id="IPR036383">
    <property type="entry name" value="TSP1_rpt_sf"/>
</dbReference>
<dbReference type="PANTHER" id="PTHR45742">
    <property type="entry name" value="COMPLEMENT COMPONENT C6"/>
    <property type="match status" value="1"/>
</dbReference>
<dbReference type="PANTHER" id="PTHR45742:SF3">
    <property type="entry name" value="COMPLEMENT COMPONENT C9"/>
    <property type="match status" value="1"/>
</dbReference>
<dbReference type="Pfam" id="PF00057">
    <property type="entry name" value="Ldl_recept_a"/>
    <property type="match status" value="1"/>
</dbReference>
<dbReference type="Pfam" id="PF01823">
    <property type="entry name" value="MACPF"/>
    <property type="match status" value="1"/>
</dbReference>
<dbReference type="Pfam" id="PF00090">
    <property type="entry name" value="TSP_1"/>
    <property type="match status" value="1"/>
</dbReference>
<dbReference type="PRINTS" id="PR00764">
    <property type="entry name" value="COMPLEMENTC9"/>
</dbReference>
<dbReference type="SMART" id="SM00192">
    <property type="entry name" value="LDLa"/>
    <property type="match status" value="1"/>
</dbReference>
<dbReference type="SMART" id="SM00457">
    <property type="entry name" value="MACPF"/>
    <property type="match status" value="1"/>
</dbReference>
<dbReference type="SMART" id="SM00209">
    <property type="entry name" value="TSP1"/>
    <property type="match status" value="1"/>
</dbReference>
<dbReference type="SUPFAM" id="SSF57196">
    <property type="entry name" value="EGF/Laminin"/>
    <property type="match status" value="1"/>
</dbReference>
<dbReference type="SUPFAM" id="SSF57424">
    <property type="entry name" value="LDL receptor-like module"/>
    <property type="match status" value="1"/>
</dbReference>
<dbReference type="SUPFAM" id="SSF82895">
    <property type="entry name" value="TSP-1 type 1 repeat"/>
    <property type="match status" value="1"/>
</dbReference>
<dbReference type="PROSITE" id="PS00022">
    <property type="entry name" value="EGF_1"/>
    <property type="match status" value="1"/>
</dbReference>
<dbReference type="PROSITE" id="PS01186">
    <property type="entry name" value="EGF_2"/>
    <property type="match status" value="1"/>
</dbReference>
<dbReference type="PROSITE" id="PS01209">
    <property type="entry name" value="LDLRA_1"/>
    <property type="match status" value="1"/>
</dbReference>
<dbReference type="PROSITE" id="PS50068">
    <property type="entry name" value="LDLRA_2"/>
    <property type="match status" value="1"/>
</dbReference>
<dbReference type="PROSITE" id="PS00279">
    <property type="entry name" value="MACPF_1"/>
    <property type="match status" value="1"/>
</dbReference>
<dbReference type="PROSITE" id="PS51412">
    <property type="entry name" value="MACPF_2"/>
    <property type="match status" value="1"/>
</dbReference>
<dbReference type="PROSITE" id="PS50092">
    <property type="entry name" value="TSP1"/>
    <property type="match status" value="1"/>
</dbReference>
<accession>P48747</accession>
<name>CO9_RABIT</name>
<feature type="signal peptide" evidence="6">
    <location>
        <begin position="1"/>
        <end position="21"/>
    </location>
</feature>
<feature type="chain" id="PRO_0000023606" description="Complement component C9">
    <location>
        <begin position="22"/>
        <end position="557"/>
    </location>
</feature>
<feature type="transmembrane region" description="Beta stranded" evidence="1">
    <location>
        <begin position="236"/>
        <end position="243"/>
    </location>
</feature>
<feature type="transmembrane region" description="Beta stranded" evidence="1">
    <location>
        <begin position="270"/>
        <end position="277"/>
    </location>
</feature>
<feature type="transmembrane region" description="Beta stranded" evidence="1">
    <location>
        <begin position="379"/>
        <end position="386"/>
    </location>
</feature>
<feature type="transmembrane region" description="Beta stranded" evidence="1">
    <location>
        <begin position="387"/>
        <end position="395"/>
    </location>
</feature>
<feature type="domain" description="TSP type-1" evidence="4">
    <location>
        <begin position="42"/>
        <end position="95"/>
    </location>
</feature>
<feature type="domain" description="LDL-receptor class A" evidence="3">
    <location>
        <begin position="99"/>
        <end position="137"/>
    </location>
</feature>
<feature type="domain" description="MACPF" evidence="5">
    <location>
        <begin position="139"/>
        <end position="519"/>
    </location>
</feature>
<feature type="domain" description="EGF-like">
    <location>
        <begin position="520"/>
        <end position="550"/>
    </location>
</feature>
<feature type="glycosylation site" description="N-linked (GlcNAc...) asparagine" evidence="2">
    <location>
        <position position="261"/>
    </location>
</feature>
<feature type="glycosylation site" description="N-linked (GlcNAc...) asparagine" evidence="2">
    <location>
        <position position="282"/>
    </location>
</feature>
<feature type="glycosylation site" description="N-linked (GlcNAc...) asparagine" evidence="2">
    <location>
        <position position="424"/>
    </location>
</feature>
<feature type="disulfide bond" evidence="1">
    <location>
        <begin position="43"/>
        <end position="78"/>
    </location>
</feature>
<feature type="disulfide bond" evidence="1">
    <location>
        <begin position="54"/>
        <end position="88"/>
    </location>
</feature>
<feature type="disulfide bond" evidence="1">
    <location>
        <begin position="57"/>
        <end position="94"/>
    </location>
</feature>
<feature type="disulfide bond" evidence="1">
    <location>
        <begin position="101"/>
        <end position="113"/>
    </location>
</feature>
<feature type="disulfide bond" evidence="1">
    <location>
        <begin position="108"/>
        <end position="126"/>
    </location>
</feature>
<feature type="disulfide bond" evidence="1">
    <location>
        <begin position="120"/>
        <end position="135"/>
    </location>
</feature>
<feature type="disulfide bond" evidence="1">
    <location>
        <begin position="143"/>
        <end position="182"/>
    </location>
</feature>
<feature type="disulfide bond" evidence="1">
    <location>
        <begin position="385"/>
        <end position="414"/>
    </location>
</feature>
<feature type="disulfide bond" evidence="1">
    <location>
        <begin position="520"/>
        <end position="536"/>
    </location>
</feature>
<feature type="disulfide bond" evidence="1">
    <location>
        <begin position="523"/>
        <end position="538"/>
    </location>
</feature>
<feature type="disulfide bond" evidence="1">
    <location>
        <begin position="540"/>
        <end position="549"/>
    </location>
</feature>
<organism>
    <name type="scientific">Oryctolagus cuniculus</name>
    <name type="common">Rabbit</name>
    <dbReference type="NCBI Taxonomy" id="9986"/>
    <lineage>
        <taxon>Eukaryota</taxon>
        <taxon>Metazoa</taxon>
        <taxon>Chordata</taxon>
        <taxon>Craniata</taxon>
        <taxon>Vertebrata</taxon>
        <taxon>Euteleostomi</taxon>
        <taxon>Mammalia</taxon>
        <taxon>Eutheria</taxon>
        <taxon>Euarchontoglires</taxon>
        <taxon>Glires</taxon>
        <taxon>Lagomorpha</taxon>
        <taxon>Leporidae</taxon>
        <taxon>Oryctolagus</taxon>
    </lineage>
</organism>
<reference key="1">
    <citation type="journal article" date="1995" name="J. Biol. Chem.">
        <title>Chimeras of human complement C9 reveal the site recognized by complement regulatory protein CD59.</title>
        <authorList>
            <person name="Huesler T."/>
            <person name="Lockert D.H."/>
            <person name="Kaufman K.M."/>
            <person name="Sodetz J.M."/>
            <person name="Sims P.J."/>
        </authorList>
    </citation>
    <scope>NUCLEOTIDE SEQUENCE [MRNA]</scope>
    <scope>PROTEIN SEQUENCE OF 22-34</scope>
    <source>
        <strain>New Zealand white</strain>
        <tissue>Liver</tissue>
    </source>
</reference>
<comment type="function">
    <text evidence="1">Pore-forming component of the membrane attack complex (MAC), a multiprotein complex activated by the complement cascade, which inserts into a target cell membrane and forms a pore, leading to target cell membrane rupture and cell lysis. The MAC is initiated by proteolytic cleavage of C5 into complement C5b in response to the classical, alternative, lectin and GZMK complement pathways. The complement pathways consist in a cascade of proteins that leads to phagocytosis and breakdown of pathogens and signaling that strengthens the adaptive immune system. Constitutes the pore-forming subunit of the MAC complex: during MAC assembly, C9 associates with the C5b8 intermediate complex, and polymerizes to complete the pore.</text>
</comment>
<comment type="activity regulation">
    <text evidence="1">Membrane attack complex (MAC) assembly is inhibited by CD59, thereby protecting self-cells from damage during complement activation. CD59 acts by preventing incorporation of the multiple copies of C9 required for complete formation of the osmolytic pore. MAC assembly is also inhibited by clusterin (CLU) chaperones that inhibit polymerization of C9.</text>
</comment>
<comment type="subunit">
    <text evidence="1">Homooligomer; about 20 C9 chains oligomerize to give rise to a huge beta-barrel that forms a 100 Angstrom diameter pore in target membranes. Component of the membrane attack complex (MAC), composed of complement C5b, C6, C7, C8A, C8B, C8G and multiple copies of the pore-forming subunit C9.</text>
</comment>
<comment type="subcellular location">
    <subcellularLocation>
        <location evidence="1">Secreted</location>
    </subcellularLocation>
    <subcellularLocation>
        <location evidence="1">Target cell membrane</location>
        <topology evidence="1">Multi-pass membrane protein</topology>
    </subcellularLocation>
    <text evidence="1">Secreted as soluble monomer. Oligomerizes at target membranes, forming a pre-pore. A conformation change then leads to the formation of a 100 Angstrom diameter pore.</text>
</comment>
<comment type="PTM">
    <text evidence="1">Phosphorylation sites are present in the extracellular medium.</text>
</comment>
<comment type="similarity">
    <text evidence="7">Belongs to the complement C6/C7/C8/C9 family.</text>
</comment>
<sequence length="557" mass="62662">MAASHSFAFVVCVLEIGALTAGPTPSYVHEPIQRSDPLQPIDCRMSPWSEWSHCDPCLRQMFRSRSIEVFGQFHGKSCVDALGDRRACIPTEACEDAEEDCEKDEFHCGTGRCIKRRLLCNGDNDCGDFSDEDDCETEPRLTCRNREVQESELARTAGYGINILGMDPLATPFDNEYYHGLCDRVWDGNTLTHYRKPWNVAVLAYETKIDKNFRTEYYEEQMQAFKSIIEEETSNFNANLALKFTPTEAKASKAEEASPKNKSLDDNDKGFSSKFQFSYSKNETYQLFLSYSSQKEKMFLLVKGIIQLGRFVMKNRGVMLTNTFLDDIKSLPTTYEKGEYFAFLETYGTHYSSSGSLGGRYELIYVLDKASMKEKGIELNDIKKCLGFDLDLSLNIPGKSAGLSLTGQANKNNCLKSGHGNAVNITRANLIDDVISLIRGGTQKFAFELKEKLLTKAKMVDVTDFINWASSLSDAPVLINQKLSPIYNLIPVKIKDAHQKRQNLERGIEDYINEFSTKKCSPCQNGGTALLMDGQCLCTCPFMFEGIACEISKRKLA</sequence>
<evidence type="ECO:0000250" key="1">
    <source>
        <dbReference type="UniProtKB" id="P02748"/>
    </source>
</evidence>
<evidence type="ECO:0000255" key="2"/>
<evidence type="ECO:0000255" key="3">
    <source>
        <dbReference type="PROSITE-ProRule" id="PRU00124"/>
    </source>
</evidence>
<evidence type="ECO:0000255" key="4">
    <source>
        <dbReference type="PROSITE-ProRule" id="PRU00210"/>
    </source>
</evidence>
<evidence type="ECO:0000255" key="5">
    <source>
        <dbReference type="PROSITE-ProRule" id="PRU00745"/>
    </source>
</evidence>
<evidence type="ECO:0000269" key="6">
    <source>
    </source>
</evidence>
<evidence type="ECO:0000305" key="7"/>
<gene>
    <name type="primary">C9</name>
</gene>
<protein>
    <recommendedName>
        <fullName>Complement component C9</fullName>
    </recommendedName>
</protein>